<accession>C6C1F4</accession>
<evidence type="ECO:0000255" key="1">
    <source>
        <dbReference type="HAMAP-Rule" id="MF_00563"/>
    </source>
</evidence>
<keyword id="KW-0963">Cytoplasm</keyword>
<keyword id="KW-0378">Hydrolase</keyword>
<keyword id="KW-0520">NAD</keyword>
<keyword id="KW-0554">One-carbon metabolism</keyword>
<keyword id="KW-1185">Reference proteome</keyword>
<reference key="1">
    <citation type="submission" date="2009-06" db="EMBL/GenBank/DDBJ databases">
        <title>Complete sequence of Desulfovibrio salexigens DSM 2638.</title>
        <authorList>
            <consortium name="US DOE Joint Genome Institute"/>
            <person name="Lucas S."/>
            <person name="Copeland A."/>
            <person name="Lapidus A."/>
            <person name="Glavina del Rio T."/>
            <person name="Tice H."/>
            <person name="Bruce D."/>
            <person name="Goodwin L."/>
            <person name="Pitluck S."/>
            <person name="Munk A.C."/>
            <person name="Brettin T."/>
            <person name="Detter J.C."/>
            <person name="Han C."/>
            <person name="Tapia R."/>
            <person name="Larimer F."/>
            <person name="Land M."/>
            <person name="Hauser L."/>
            <person name="Kyrpides N."/>
            <person name="Anderson I."/>
            <person name="Wall J.D."/>
            <person name="Arkin A.P."/>
            <person name="Dehal P."/>
            <person name="Chivian D."/>
            <person name="Giles B."/>
            <person name="Hazen T.C."/>
        </authorList>
    </citation>
    <scope>NUCLEOTIDE SEQUENCE [LARGE SCALE GENOMIC DNA]</scope>
    <source>
        <strain>ATCC 14822 / DSM 2638 / NCIMB 8403 / VKM B-1763</strain>
    </source>
</reference>
<proteinExistence type="inferred from homology"/>
<feature type="chain" id="PRO_1000212053" description="Adenosylhomocysteinase">
    <location>
        <begin position="1"/>
        <end position="472"/>
    </location>
</feature>
<feature type="binding site" evidence="1">
    <location>
        <position position="60"/>
    </location>
    <ligand>
        <name>substrate</name>
    </ligand>
</feature>
<feature type="binding site" evidence="1">
    <location>
        <position position="136"/>
    </location>
    <ligand>
        <name>substrate</name>
    </ligand>
</feature>
<feature type="binding site" evidence="1">
    <location>
        <position position="197"/>
    </location>
    <ligand>
        <name>substrate</name>
    </ligand>
</feature>
<feature type="binding site" evidence="1">
    <location>
        <begin position="198"/>
        <end position="200"/>
    </location>
    <ligand>
        <name>NAD(+)</name>
        <dbReference type="ChEBI" id="CHEBI:57540"/>
    </ligand>
</feature>
<feature type="binding site" evidence="1">
    <location>
        <position position="227"/>
    </location>
    <ligand>
        <name>substrate</name>
    </ligand>
</feature>
<feature type="binding site" evidence="1">
    <location>
        <position position="231"/>
    </location>
    <ligand>
        <name>substrate</name>
    </ligand>
</feature>
<feature type="binding site" evidence="1">
    <location>
        <position position="232"/>
    </location>
    <ligand>
        <name>NAD(+)</name>
        <dbReference type="ChEBI" id="CHEBI:57540"/>
    </ligand>
</feature>
<feature type="binding site" evidence="1">
    <location>
        <begin position="261"/>
        <end position="266"/>
    </location>
    <ligand>
        <name>NAD(+)</name>
        <dbReference type="ChEBI" id="CHEBI:57540"/>
    </ligand>
</feature>
<feature type="binding site" evidence="1">
    <location>
        <position position="284"/>
    </location>
    <ligand>
        <name>NAD(+)</name>
        <dbReference type="ChEBI" id="CHEBI:57540"/>
    </ligand>
</feature>
<feature type="binding site" evidence="1">
    <location>
        <position position="319"/>
    </location>
    <ligand>
        <name>NAD(+)</name>
        <dbReference type="ChEBI" id="CHEBI:57540"/>
    </ligand>
</feature>
<feature type="binding site" evidence="1">
    <location>
        <begin position="340"/>
        <end position="342"/>
    </location>
    <ligand>
        <name>NAD(+)</name>
        <dbReference type="ChEBI" id="CHEBI:57540"/>
    </ligand>
</feature>
<feature type="binding site" evidence="1">
    <location>
        <position position="388"/>
    </location>
    <ligand>
        <name>NAD(+)</name>
        <dbReference type="ChEBI" id="CHEBI:57540"/>
    </ligand>
</feature>
<dbReference type="EC" id="3.13.2.1" evidence="1"/>
<dbReference type="EMBL" id="CP001649">
    <property type="protein sequence ID" value="ACS81129.1"/>
    <property type="molecule type" value="Genomic_DNA"/>
</dbReference>
<dbReference type="RefSeq" id="WP_015852945.1">
    <property type="nucleotide sequence ID" value="NC_012881.1"/>
</dbReference>
<dbReference type="SMR" id="C6C1F4"/>
<dbReference type="STRING" id="526222.Desal_3077"/>
<dbReference type="KEGG" id="dsa:Desal_3077"/>
<dbReference type="eggNOG" id="COG0499">
    <property type="taxonomic scope" value="Bacteria"/>
</dbReference>
<dbReference type="HOGENOM" id="CLU_025194_2_1_7"/>
<dbReference type="OrthoDB" id="9802717at2"/>
<dbReference type="UniPathway" id="UPA00314">
    <property type="reaction ID" value="UER00076"/>
</dbReference>
<dbReference type="Proteomes" id="UP000002601">
    <property type="component" value="Chromosome"/>
</dbReference>
<dbReference type="GO" id="GO:0005829">
    <property type="term" value="C:cytosol"/>
    <property type="evidence" value="ECO:0007669"/>
    <property type="project" value="TreeGrafter"/>
</dbReference>
<dbReference type="GO" id="GO:0004013">
    <property type="term" value="F:adenosylhomocysteinase activity"/>
    <property type="evidence" value="ECO:0007669"/>
    <property type="project" value="UniProtKB-UniRule"/>
</dbReference>
<dbReference type="GO" id="GO:0071269">
    <property type="term" value="P:L-homocysteine biosynthetic process"/>
    <property type="evidence" value="ECO:0007669"/>
    <property type="project" value="UniProtKB-UniRule"/>
</dbReference>
<dbReference type="GO" id="GO:0006730">
    <property type="term" value="P:one-carbon metabolic process"/>
    <property type="evidence" value="ECO:0007669"/>
    <property type="project" value="UniProtKB-KW"/>
</dbReference>
<dbReference type="GO" id="GO:0033353">
    <property type="term" value="P:S-adenosylmethionine cycle"/>
    <property type="evidence" value="ECO:0007669"/>
    <property type="project" value="TreeGrafter"/>
</dbReference>
<dbReference type="CDD" id="cd00401">
    <property type="entry name" value="SAHH"/>
    <property type="match status" value="1"/>
</dbReference>
<dbReference type="FunFam" id="3.40.50.720:FF:000004">
    <property type="entry name" value="Adenosylhomocysteinase"/>
    <property type="match status" value="1"/>
</dbReference>
<dbReference type="Gene3D" id="3.40.50.1480">
    <property type="entry name" value="Adenosylhomocysteinase-like"/>
    <property type="match status" value="1"/>
</dbReference>
<dbReference type="Gene3D" id="3.40.50.720">
    <property type="entry name" value="NAD(P)-binding Rossmann-like Domain"/>
    <property type="match status" value="1"/>
</dbReference>
<dbReference type="HAMAP" id="MF_00563">
    <property type="entry name" value="AdoHcyase"/>
    <property type="match status" value="1"/>
</dbReference>
<dbReference type="InterPro" id="IPR042172">
    <property type="entry name" value="Adenosylhomocyst_ase-like_sf"/>
</dbReference>
<dbReference type="InterPro" id="IPR000043">
    <property type="entry name" value="Adenosylhomocysteinase-like"/>
</dbReference>
<dbReference type="InterPro" id="IPR015878">
    <property type="entry name" value="Ado_hCys_hydrolase_NAD-bd"/>
</dbReference>
<dbReference type="InterPro" id="IPR036291">
    <property type="entry name" value="NAD(P)-bd_dom_sf"/>
</dbReference>
<dbReference type="InterPro" id="IPR020082">
    <property type="entry name" value="S-Ado-L-homoCys_hydrolase_CS"/>
</dbReference>
<dbReference type="NCBIfam" id="TIGR00936">
    <property type="entry name" value="ahcY"/>
    <property type="match status" value="1"/>
</dbReference>
<dbReference type="NCBIfam" id="NF004005">
    <property type="entry name" value="PRK05476.2-3"/>
    <property type="match status" value="1"/>
</dbReference>
<dbReference type="PANTHER" id="PTHR23420">
    <property type="entry name" value="ADENOSYLHOMOCYSTEINASE"/>
    <property type="match status" value="1"/>
</dbReference>
<dbReference type="PANTHER" id="PTHR23420:SF0">
    <property type="entry name" value="ADENOSYLHOMOCYSTEINASE"/>
    <property type="match status" value="1"/>
</dbReference>
<dbReference type="Pfam" id="PF05221">
    <property type="entry name" value="AdoHcyase"/>
    <property type="match status" value="1"/>
</dbReference>
<dbReference type="Pfam" id="PF00670">
    <property type="entry name" value="AdoHcyase_NAD"/>
    <property type="match status" value="1"/>
</dbReference>
<dbReference type="PIRSF" id="PIRSF001109">
    <property type="entry name" value="Ad_hcy_hydrolase"/>
    <property type="match status" value="1"/>
</dbReference>
<dbReference type="SMART" id="SM00996">
    <property type="entry name" value="AdoHcyase"/>
    <property type="match status" value="1"/>
</dbReference>
<dbReference type="SMART" id="SM00997">
    <property type="entry name" value="AdoHcyase_NAD"/>
    <property type="match status" value="1"/>
</dbReference>
<dbReference type="SUPFAM" id="SSF52283">
    <property type="entry name" value="Formate/glycerate dehydrogenase catalytic domain-like"/>
    <property type="match status" value="1"/>
</dbReference>
<dbReference type="SUPFAM" id="SSF51735">
    <property type="entry name" value="NAD(P)-binding Rossmann-fold domains"/>
    <property type="match status" value="1"/>
</dbReference>
<dbReference type="PROSITE" id="PS00738">
    <property type="entry name" value="ADOHCYASE_1"/>
    <property type="match status" value="1"/>
</dbReference>
<dbReference type="PROSITE" id="PS00739">
    <property type="entry name" value="ADOHCYASE_2"/>
    <property type="match status" value="1"/>
</dbReference>
<protein>
    <recommendedName>
        <fullName evidence="1">Adenosylhomocysteinase</fullName>
        <ecNumber evidence="1">3.13.2.1</ecNumber>
    </recommendedName>
    <alternativeName>
        <fullName evidence="1">S-adenosyl-L-homocysteine hydrolase</fullName>
        <shortName evidence="1">AdoHcyase</shortName>
    </alternativeName>
</protein>
<name>SAHH_MARSD</name>
<organism>
    <name type="scientific">Maridesulfovibrio salexigens (strain ATCC 14822 / DSM 2638 / NCIMB 8403 / VKM B-1763)</name>
    <name type="common">Desulfovibrio salexigens</name>
    <dbReference type="NCBI Taxonomy" id="526222"/>
    <lineage>
        <taxon>Bacteria</taxon>
        <taxon>Pseudomonadati</taxon>
        <taxon>Thermodesulfobacteriota</taxon>
        <taxon>Desulfovibrionia</taxon>
        <taxon>Desulfovibrionales</taxon>
        <taxon>Desulfovibrionaceae</taxon>
        <taxon>Maridesulfovibrio</taxon>
    </lineage>
</organism>
<gene>
    <name evidence="1" type="primary">ahcY</name>
    <name type="ordered locus">Desal_3077</name>
</gene>
<sequence>MLKVDSKLDYKVADISLADWGNKEMQLSEREMPGLMSIREKYGKEKPLKGLKVMGSLHMTIQTAMLIETLHALGADIRWASCNIFSTQDHAAAAIAANGTAKVFAWKGETLEEYWWCTEQALTWPDGSGPDLIVDDGGDATLLIHHGVKAEKDASILDEKTDNKEFQCVLDRLKLSVAETPGKWTAIAEKVRGVSEETTTGVHRLYQMQEAGELLFPAINVNDSVTKSKFDNLYGCRESLADGIKRATDVMIAGKVVVVVGYGDVGKGCAQSMRGFGARVLVTEIDPICALQAAMEGFEVCTMANAVERGDVFVTCTGNYHVITGEHISKMKDEAIICNIGHFDNEIEMGYLENSKTAKKIEIKPQVDKWVMESGKSVIVLAEGRLVNLGCATGHPSFVMSNSFTNQALAQIDLAKNEYEPKVMILSKKLDEEVARLHLERLGVELDVLSKEQADYISVDVEGPYKPDHYRY</sequence>
<comment type="function">
    <text evidence="1">May play a key role in the regulation of the intracellular concentration of adenosylhomocysteine.</text>
</comment>
<comment type="catalytic activity">
    <reaction evidence="1">
        <text>S-adenosyl-L-homocysteine + H2O = L-homocysteine + adenosine</text>
        <dbReference type="Rhea" id="RHEA:21708"/>
        <dbReference type="ChEBI" id="CHEBI:15377"/>
        <dbReference type="ChEBI" id="CHEBI:16335"/>
        <dbReference type="ChEBI" id="CHEBI:57856"/>
        <dbReference type="ChEBI" id="CHEBI:58199"/>
        <dbReference type="EC" id="3.13.2.1"/>
    </reaction>
</comment>
<comment type="cofactor">
    <cofactor evidence="1">
        <name>NAD(+)</name>
        <dbReference type="ChEBI" id="CHEBI:57540"/>
    </cofactor>
    <text evidence="1">Binds 1 NAD(+) per subunit.</text>
</comment>
<comment type="pathway">
    <text evidence="1">Amino-acid biosynthesis; L-homocysteine biosynthesis; L-homocysteine from S-adenosyl-L-homocysteine: step 1/1.</text>
</comment>
<comment type="subcellular location">
    <subcellularLocation>
        <location evidence="1">Cytoplasm</location>
    </subcellularLocation>
</comment>
<comment type="similarity">
    <text evidence="1">Belongs to the adenosylhomocysteinase family.</text>
</comment>